<gene>
    <name type="primary">Rspo2</name>
</gene>
<proteinExistence type="evidence at protein level"/>
<comment type="function">
    <text evidence="2 8">Activator of the canonical Wnt signaling pathway by acting as a ligand for LGR4-6 receptors. Upon binding to LGR4-6 (LGR4, LGR5 or LGR6), LGR4-6 associate with phosphorylated LRP6 and frizzled receptors that are activated by extracellular Wnt receptors, triggering the canonical Wnt signaling pathway to increase expression of target genes. Also regulates the canonical Wnt/beta-catenin-dependent pathway and non-canonical Wnt signaling by acting as an inhibitor of ZNRF3, an important regulator of the Wnt signaling pathway. Probably also acts as a ligand for frizzled and LRP receptors (PubMed:21693646). During embryonic development, plays a crucial role in limb specification, amplifying the Wnt signaling pathway independently of LGR4-6 receptors, possibly by acting as a direct antagonistic ligand to RNF43 and ZNRF3, hence governing the number of limbs an embryo should form (By similarity).</text>
</comment>
<comment type="subunit">
    <text evidence="7 8">Interacts with WNT1 (PubMed:16543246). Binds heparin (PubMed:16543246). Interacts with LGR4, LGR5 and LGR6 (PubMed:21693646).</text>
</comment>
<comment type="subcellular location">
    <subcellularLocation>
        <location evidence="7">Secreted</location>
    </subcellularLocation>
</comment>
<comment type="developmental stage">
    <text evidence="6">Detected from day 9.5 in various neural and mesodermal derivatives, mainly along diencephalon. Strongly expressed in limb buds, particularly in the morphogenetically active region such as the apical ectodermal ridge (AER).</text>
</comment>
<comment type="domain">
    <text evidence="1">The FU repeat is required for activation and stabilization of beta-catenin.</text>
</comment>
<comment type="similarity">
    <text evidence="9">Belongs to the R-spondin family.</text>
</comment>
<comment type="sequence caution" evidence="9">
    <conflict type="erroneous termination">
        <sequence resource="EMBL" id="BC052844"/>
    </conflict>
    <text>Truncated C-terminus.</text>
</comment>
<feature type="signal peptide" evidence="3">
    <location>
        <begin position="1"/>
        <end position="23"/>
    </location>
</feature>
<feature type="chain" id="PRO_0000234440" description="R-spondin-2">
    <location>
        <begin position="24"/>
        <end position="243"/>
    </location>
</feature>
<feature type="repeat" description="FU">
    <location>
        <begin position="90"/>
        <end position="134"/>
    </location>
</feature>
<feature type="domain" description="TSP type-1" evidence="4">
    <location>
        <begin position="144"/>
        <end position="204"/>
    </location>
</feature>
<feature type="region of interest" description="Disordered" evidence="5">
    <location>
        <begin position="204"/>
        <end position="243"/>
    </location>
</feature>
<feature type="compositionally biased region" description="Basic residues" evidence="5">
    <location>
        <begin position="204"/>
        <end position="224"/>
    </location>
</feature>
<feature type="glycosylation site" description="N-linked (GlcNAc...) asparagine" evidence="3">
    <location>
        <position position="160"/>
    </location>
</feature>
<feature type="disulfide bond" evidence="4">
    <location>
        <begin position="40"/>
        <end position="46"/>
    </location>
</feature>
<feature type="disulfide bond" evidence="4">
    <location>
        <begin position="43"/>
        <end position="52"/>
    </location>
</feature>
<feature type="disulfide bond" evidence="4">
    <location>
        <begin position="55"/>
        <end position="74"/>
    </location>
</feature>
<feature type="disulfide bond" evidence="4">
    <location>
        <begin position="78"/>
        <end position="93"/>
    </location>
</feature>
<feature type="disulfide bond" evidence="4">
    <location>
        <begin position="96"/>
        <end position="104"/>
    </location>
</feature>
<feature type="disulfide bond" evidence="4">
    <location>
        <begin position="101"/>
        <end position="110"/>
    </location>
</feature>
<feature type="disulfide bond" evidence="4">
    <location>
        <begin position="113"/>
        <end position="124"/>
    </location>
</feature>
<feature type="disulfide bond" evidence="4">
    <location>
        <begin position="128"/>
        <end position="141"/>
    </location>
</feature>
<feature type="disulfide bond" evidence="4">
    <location>
        <begin position="145"/>
        <end position="187"/>
    </location>
</feature>
<feature type="disulfide bond" evidence="4">
    <location>
        <begin position="156"/>
        <end position="163"/>
    </location>
</feature>
<feature type="disulfide bond" evidence="4">
    <location>
        <begin position="196"/>
        <end position="203"/>
    </location>
</feature>
<feature type="strand" evidence="10">
    <location>
        <begin position="43"/>
        <end position="45"/>
    </location>
</feature>
<feature type="strand" evidence="11">
    <location>
        <begin position="48"/>
        <end position="55"/>
    </location>
</feature>
<feature type="strand" evidence="11">
    <location>
        <begin position="59"/>
        <end position="65"/>
    </location>
</feature>
<feature type="strand" evidence="11">
    <location>
        <begin position="67"/>
        <end position="77"/>
    </location>
</feature>
<feature type="strand" evidence="11">
    <location>
        <begin position="82"/>
        <end position="87"/>
    </location>
</feature>
<feature type="strand" evidence="11">
    <location>
        <begin position="90"/>
        <end position="95"/>
    </location>
</feature>
<feature type="strand" evidence="11">
    <location>
        <begin position="101"/>
        <end position="106"/>
    </location>
</feature>
<feature type="strand" evidence="11">
    <location>
        <begin position="109"/>
        <end position="113"/>
    </location>
</feature>
<feature type="strand" evidence="11">
    <location>
        <begin position="118"/>
        <end position="120"/>
    </location>
</feature>
<feature type="strand" evidence="11">
    <location>
        <begin position="123"/>
        <end position="127"/>
    </location>
</feature>
<feature type="turn" evidence="11">
    <location>
        <begin position="136"/>
        <end position="139"/>
    </location>
</feature>
<sequence length="243" mass="28276">MRFCLFSFALIILNCMDYSQCQGNRWRRNKRASYVSNPICKGCLSCSKDNGCSRCQQKLFFFLRREGMRQYGECLHSCPSGYYGHRAPDMNRCARCRIENCDSCFSKDFCTKCKVGFYLHRGRCFDECPDGFAPLDETMECVEGCEVGHWSEWGTCSRNNRTCGFKWGLETRTRQIVKKPAKDTIPCPTIAESRRCKMAMRHCPGGKRTPKAKEKRNKKKRRKLIERAQEQHSVFLATDRVNQ</sequence>
<protein>
    <recommendedName>
        <fullName>R-spondin-2</fullName>
    </recommendedName>
    <alternativeName>
        <fullName>Cysteine-rich and single thrombospondin domain-containing protein 2</fullName>
        <shortName>Cristin-2</shortName>
        <shortName>mCristin-2</shortName>
    </alternativeName>
    <alternativeName>
        <fullName>Roof plate-specific spondin-2</fullName>
    </alternativeName>
</protein>
<keyword id="KW-0002">3D-structure</keyword>
<keyword id="KW-0217">Developmental protein</keyword>
<keyword id="KW-1015">Disulfide bond</keyword>
<keyword id="KW-0325">Glycoprotein</keyword>
<keyword id="KW-0358">Heparin-binding</keyword>
<keyword id="KW-1185">Reference proteome</keyword>
<keyword id="KW-0964">Secreted</keyword>
<keyword id="KW-0716">Sensory transduction</keyword>
<keyword id="KW-0732">Signal</keyword>
<keyword id="KW-0879">Wnt signaling pathway</keyword>
<reference key="1">
    <citation type="journal article" date="2005" name="Science">
        <title>The transcriptional landscape of the mammalian genome.</title>
        <authorList>
            <person name="Carninci P."/>
            <person name="Kasukawa T."/>
            <person name="Katayama S."/>
            <person name="Gough J."/>
            <person name="Frith M.C."/>
            <person name="Maeda N."/>
            <person name="Oyama R."/>
            <person name="Ravasi T."/>
            <person name="Lenhard B."/>
            <person name="Wells C."/>
            <person name="Kodzius R."/>
            <person name="Shimokawa K."/>
            <person name="Bajic V.B."/>
            <person name="Brenner S.E."/>
            <person name="Batalov S."/>
            <person name="Forrest A.R."/>
            <person name="Zavolan M."/>
            <person name="Davis M.J."/>
            <person name="Wilming L.G."/>
            <person name="Aidinis V."/>
            <person name="Allen J.E."/>
            <person name="Ambesi-Impiombato A."/>
            <person name="Apweiler R."/>
            <person name="Aturaliya R.N."/>
            <person name="Bailey T.L."/>
            <person name="Bansal M."/>
            <person name="Baxter L."/>
            <person name="Beisel K.W."/>
            <person name="Bersano T."/>
            <person name="Bono H."/>
            <person name="Chalk A.M."/>
            <person name="Chiu K.P."/>
            <person name="Choudhary V."/>
            <person name="Christoffels A."/>
            <person name="Clutterbuck D.R."/>
            <person name="Crowe M.L."/>
            <person name="Dalla E."/>
            <person name="Dalrymple B.P."/>
            <person name="de Bono B."/>
            <person name="Della Gatta G."/>
            <person name="di Bernardo D."/>
            <person name="Down T."/>
            <person name="Engstrom P."/>
            <person name="Fagiolini M."/>
            <person name="Faulkner G."/>
            <person name="Fletcher C.F."/>
            <person name="Fukushima T."/>
            <person name="Furuno M."/>
            <person name="Futaki S."/>
            <person name="Gariboldi M."/>
            <person name="Georgii-Hemming P."/>
            <person name="Gingeras T.R."/>
            <person name="Gojobori T."/>
            <person name="Green R.E."/>
            <person name="Gustincich S."/>
            <person name="Harbers M."/>
            <person name="Hayashi Y."/>
            <person name="Hensch T.K."/>
            <person name="Hirokawa N."/>
            <person name="Hill D."/>
            <person name="Huminiecki L."/>
            <person name="Iacono M."/>
            <person name="Ikeo K."/>
            <person name="Iwama A."/>
            <person name="Ishikawa T."/>
            <person name="Jakt M."/>
            <person name="Kanapin A."/>
            <person name="Katoh M."/>
            <person name="Kawasawa Y."/>
            <person name="Kelso J."/>
            <person name="Kitamura H."/>
            <person name="Kitano H."/>
            <person name="Kollias G."/>
            <person name="Krishnan S.P."/>
            <person name="Kruger A."/>
            <person name="Kummerfeld S.K."/>
            <person name="Kurochkin I.V."/>
            <person name="Lareau L.F."/>
            <person name="Lazarevic D."/>
            <person name="Lipovich L."/>
            <person name="Liu J."/>
            <person name="Liuni S."/>
            <person name="McWilliam S."/>
            <person name="Madan Babu M."/>
            <person name="Madera M."/>
            <person name="Marchionni L."/>
            <person name="Matsuda H."/>
            <person name="Matsuzawa S."/>
            <person name="Miki H."/>
            <person name="Mignone F."/>
            <person name="Miyake S."/>
            <person name="Morris K."/>
            <person name="Mottagui-Tabar S."/>
            <person name="Mulder N."/>
            <person name="Nakano N."/>
            <person name="Nakauchi H."/>
            <person name="Ng P."/>
            <person name="Nilsson R."/>
            <person name="Nishiguchi S."/>
            <person name="Nishikawa S."/>
            <person name="Nori F."/>
            <person name="Ohara O."/>
            <person name="Okazaki Y."/>
            <person name="Orlando V."/>
            <person name="Pang K.C."/>
            <person name="Pavan W.J."/>
            <person name="Pavesi G."/>
            <person name="Pesole G."/>
            <person name="Petrovsky N."/>
            <person name="Piazza S."/>
            <person name="Reed J."/>
            <person name="Reid J.F."/>
            <person name="Ring B.Z."/>
            <person name="Ringwald M."/>
            <person name="Rost B."/>
            <person name="Ruan Y."/>
            <person name="Salzberg S.L."/>
            <person name="Sandelin A."/>
            <person name="Schneider C."/>
            <person name="Schoenbach C."/>
            <person name="Sekiguchi K."/>
            <person name="Semple C.A."/>
            <person name="Seno S."/>
            <person name="Sessa L."/>
            <person name="Sheng Y."/>
            <person name="Shibata Y."/>
            <person name="Shimada H."/>
            <person name="Shimada K."/>
            <person name="Silva D."/>
            <person name="Sinclair B."/>
            <person name="Sperling S."/>
            <person name="Stupka E."/>
            <person name="Sugiura K."/>
            <person name="Sultana R."/>
            <person name="Takenaka Y."/>
            <person name="Taki K."/>
            <person name="Tammoja K."/>
            <person name="Tan S.L."/>
            <person name="Tang S."/>
            <person name="Taylor M.S."/>
            <person name="Tegner J."/>
            <person name="Teichmann S.A."/>
            <person name="Ueda H.R."/>
            <person name="van Nimwegen E."/>
            <person name="Verardo R."/>
            <person name="Wei C.L."/>
            <person name="Yagi K."/>
            <person name="Yamanishi H."/>
            <person name="Zabarovsky E."/>
            <person name="Zhu S."/>
            <person name="Zimmer A."/>
            <person name="Hide W."/>
            <person name="Bult C."/>
            <person name="Grimmond S.M."/>
            <person name="Teasdale R.D."/>
            <person name="Liu E.T."/>
            <person name="Brusic V."/>
            <person name="Quackenbush J."/>
            <person name="Wahlestedt C."/>
            <person name="Mattick J.S."/>
            <person name="Hume D.A."/>
            <person name="Kai C."/>
            <person name="Sasaki D."/>
            <person name="Tomaru Y."/>
            <person name="Fukuda S."/>
            <person name="Kanamori-Katayama M."/>
            <person name="Suzuki M."/>
            <person name="Aoki J."/>
            <person name="Arakawa T."/>
            <person name="Iida J."/>
            <person name="Imamura K."/>
            <person name="Itoh M."/>
            <person name="Kato T."/>
            <person name="Kawaji H."/>
            <person name="Kawagashira N."/>
            <person name="Kawashima T."/>
            <person name="Kojima M."/>
            <person name="Kondo S."/>
            <person name="Konno H."/>
            <person name="Nakano K."/>
            <person name="Ninomiya N."/>
            <person name="Nishio T."/>
            <person name="Okada M."/>
            <person name="Plessy C."/>
            <person name="Shibata K."/>
            <person name="Shiraki T."/>
            <person name="Suzuki S."/>
            <person name="Tagami M."/>
            <person name="Waki K."/>
            <person name="Watahiki A."/>
            <person name="Okamura-Oho Y."/>
            <person name="Suzuki H."/>
            <person name="Kawai J."/>
            <person name="Hayashizaki Y."/>
        </authorList>
    </citation>
    <scope>NUCLEOTIDE SEQUENCE [LARGE SCALE MRNA]</scope>
    <source>
        <strain>C57BL/6J</strain>
        <tissue>Eye</tissue>
        <tissue>Hippocampus</tissue>
    </source>
</reference>
<reference key="2">
    <citation type="journal article" date="2004" name="Genome Res.">
        <title>The status, quality, and expansion of the NIH full-length cDNA project: the Mammalian Gene Collection (MGC).</title>
        <authorList>
            <consortium name="The MGC Project Team"/>
        </authorList>
    </citation>
    <scope>NUCLEOTIDE SEQUENCE [LARGE SCALE MRNA]</scope>
    <source>
        <strain>C57BL/6J</strain>
        <tissue>Egg</tissue>
    </source>
</reference>
<reference key="3">
    <citation type="journal article" date="2004" name="Dev. Cell">
        <title>R-Spondin2 is a secreted activator of Wnt/beta-catenin signaling and is required for Xenopus myogenesis.</title>
        <authorList>
            <person name="Kazanskaya O."/>
            <person name="Glinka A."/>
            <person name="del Barco Barrantes I."/>
            <person name="Stannek P."/>
            <person name="Niehrs C."/>
            <person name="Wu W."/>
        </authorList>
    </citation>
    <scope>DEVELOPMENTAL STAGE</scope>
</reference>
<reference key="4">
    <citation type="journal article" date="2006" name="J. Biol. Chem.">
        <title>Mouse cristin/R-spondin family proteins are novel ligands for the Frizzled 8 and LRP6 receptors and activate beta-catenin-dependent gene expression.</title>
        <authorList>
            <person name="Nam J.-S."/>
            <person name="Turcotte T.J."/>
            <person name="Smith P.F."/>
            <person name="Choi S."/>
            <person name="Yoon J.K."/>
        </authorList>
    </citation>
    <scope>SUBCELLULAR LOCATION</scope>
    <scope>HEPARIN-BINDING</scope>
    <scope>INTERACTION WITH WNT1</scope>
</reference>
<reference key="5">
    <citation type="journal article" date="2011" name="Proc. Natl. Acad. Sci. U.S.A.">
        <title>R-spondins function as ligands of the orphan receptors LGR4 and LGR5 to regulate Wnt/beta-catenin signaling.</title>
        <authorList>
            <person name="Carmon K.S."/>
            <person name="Gong X."/>
            <person name="Lin Q."/>
            <person name="Thomas A."/>
            <person name="Liu Q."/>
        </authorList>
    </citation>
    <scope>FUNCTION</scope>
    <scope>INTERACTION WITH LGR4 AND LGR5</scope>
</reference>
<evidence type="ECO:0000250" key="1"/>
<evidence type="ECO:0000250" key="2">
    <source>
        <dbReference type="UniProtKB" id="Q6UXX9"/>
    </source>
</evidence>
<evidence type="ECO:0000255" key="3"/>
<evidence type="ECO:0000255" key="4">
    <source>
        <dbReference type="PROSITE-ProRule" id="PRU00210"/>
    </source>
</evidence>
<evidence type="ECO:0000256" key="5">
    <source>
        <dbReference type="SAM" id="MobiDB-lite"/>
    </source>
</evidence>
<evidence type="ECO:0000269" key="6">
    <source>
    </source>
</evidence>
<evidence type="ECO:0000269" key="7">
    <source>
    </source>
</evidence>
<evidence type="ECO:0000269" key="8">
    <source>
    </source>
</evidence>
<evidence type="ECO:0000305" key="9"/>
<evidence type="ECO:0007829" key="10">
    <source>
        <dbReference type="PDB" id="4C99"/>
    </source>
</evidence>
<evidence type="ECO:0007829" key="11">
    <source>
        <dbReference type="PDB" id="4UFR"/>
    </source>
</evidence>
<dbReference type="EMBL" id="AK049891">
    <property type="protein sequence ID" value="BAC33974.1"/>
    <property type="molecule type" value="mRNA"/>
</dbReference>
<dbReference type="EMBL" id="AK087485">
    <property type="protein sequence ID" value="BAC39893.1"/>
    <property type="molecule type" value="mRNA"/>
</dbReference>
<dbReference type="EMBL" id="BC052844">
    <property type="status" value="NOT_ANNOTATED_CDS"/>
    <property type="molecule type" value="mRNA"/>
</dbReference>
<dbReference type="CCDS" id="CCDS27451.1"/>
<dbReference type="RefSeq" id="NP_001344885.1">
    <property type="nucleotide sequence ID" value="NM_001357956.1"/>
</dbReference>
<dbReference type="RefSeq" id="NP_766403.1">
    <property type="nucleotide sequence ID" value="NM_172815.3"/>
</dbReference>
<dbReference type="RefSeq" id="XP_006520968.1">
    <property type="nucleotide sequence ID" value="XM_006520905.1"/>
</dbReference>
<dbReference type="PDB" id="4C99">
    <property type="method" value="X-ray"/>
    <property type="resolution" value="2.80 A"/>
    <property type="chains" value="B/D=37-144"/>
</dbReference>
<dbReference type="PDB" id="4UFR">
    <property type="method" value="X-ray"/>
    <property type="resolution" value="2.20 A"/>
    <property type="chains" value="B/D=39-144"/>
</dbReference>
<dbReference type="PDB" id="4UFS">
    <property type="method" value="X-ray"/>
    <property type="resolution" value="4.80 A"/>
    <property type="chains" value="B=39-144"/>
</dbReference>
<dbReference type="PDBsum" id="4C99"/>
<dbReference type="PDBsum" id="4UFR"/>
<dbReference type="PDBsum" id="4UFS"/>
<dbReference type="EMDB" id="EMD-38307"/>
<dbReference type="EMDB" id="EMD-38308"/>
<dbReference type="EMDB" id="EMD-38982"/>
<dbReference type="SMR" id="Q8BFU0"/>
<dbReference type="BioGRID" id="232079">
    <property type="interactions" value="4"/>
</dbReference>
<dbReference type="CORUM" id="Q8BFU0"/>
<dbReference type="FunCoup" id="Q8BFU0">
    <property type="interactions" value="234"/>
</dbReference>
<dbReference type="STRING" id="10090.ENSMUSP00000067325"/>
<dbReference type="GlyCosmos" id="Q8BFU0">
    <property type="glycosylation" value="1 site, No reported glycans"/>
</dbReference>
<dbReference type="GlyGen" id="Q8BFU0">
    <property type="glycosylation" value="1 site"/>
</dbReference>
<dbReference type="iPTMnet" id="Q8BFU0"/>
<dbReference type="PhosphoSitePlus" id="Q8BFU0"/>
<dbReference type="PaxDb" id="10090-ENSMUSP00000067325"/>
<dbReference type="PeptideAtlas" id="Q8BFU0"/>
<dbReference type="ProteomicsDB" id="262715"/>
<dbReference type="Antibodypedia" id="26506">
    <property type="antibodies" value="141 antibodies from 25 providers"/>
</dbReference>
<dbReference type="DNASU" id="239405"/>
<dbReference type="Ensembl" id="ENSMUST00000063492.8">
    <property type="protein sequence ID" value="ENSMUSP00000067325.7"/>
    <property type="gene ID" value="ENSMUSG00000051920.8"/>
</dbReference>
<dbReference type="Ensembl" id="ENSMUST00000226810.2">
    <property type="protein sequence ID" value="ENSMUSP00000154600.2"/>
    <property type="gene ID" value="ENSMUSG00000051920.8"/>
</dbReference>
<dbReference type="GeneID" id="239405"/>
<dbReference type="KEGG" id="mmu:239405"/>
<dbReference type="UCSC" id="uc007vpg.1">
    <property type="organism name" value="mouse"/>
</dbReference>
<dbReference type="AGR" id="MGI:1922667"/>
<dbReference type="CTD" id="340419"/>
<dbReference type="MGI" id="MGI:1922667">
    <property type="gene designation" value="Rspo2"/>
</dbReference>
<dbReference type="VEuPathDB" id="HostDB:ENSMUSG00000051920"/>
<dbReference type="eggNOG" id="KOG3525">
    <property type="taxonomic scope" value="Eukaryota"/>
</dbReference>
<dbReference type="GeneTree" id="ENSGT00940000159194"/>
<dbReference type="HOGENOM" id="CLU_064219_1_0_1"/>
<dbReference type="InParanoid" id="Q8BFU0"/>
<dbReference type="OMA" id="HGECLHA"/>
<dbReference type="OrthoDB" id="10257656at2759"/>
<dbReference type="PhylomeDB" id="Q8BFU0"/>
<dbReference type="TreeFam" id="TF331799"/>
<dbReference type="Reactome" id="R-MMU-4641263">
    <property type="pathway name" value="Regulation of FZD by ubiquitination"/>
</dbReference>
<dbReference type="BioGRID-ORCS" id="239405">
    <property type="hits" value="2 hits in 76 CRISPR screens"/>
</dbReference>
<dbReference type="ChiTaRS" id="Rspo2">
    <property type="organism name" value="mouse"/>
</dbReference>
<dbReference type="EvolutionaryTrace" id="Q8BFU0"/>
<dbReference type="PRO" id="PR:Q8BFU0"/>
<dbReference type="Proteomes" id="UP000000589">
    <property type="component" value="Chromosome 15"/>
</dbReference>
<dbReference type="RNAct" id="Q8BFU0">
    <property type="molecule type" value="protein"/>
</dbReference>
<dbReference type="Bgee" id="ENSMUSG00000051920">
    <property type="expression patterns" value="Expressed in primary oocyte and 158 other cell types or tissues"/>
</dbReference>
<dbReference type="GO" id="GO:0009986">
    <property type="term" value="C:cell surface"/>
    <property type="evidence" value="ECO:0000314"/>
    <property type="project" value="MGI"/>
</dbReference>
<dbReference type="GO" id="GO:0005576">
    <property type="term" value="C:extracellular region"/>
    <property type="evidence" value="ECO:0000314"/>
    <property type="project" value="MGI"/>
</dbReference>
<dbReference type="GO" id="GO:0008201">
    <property type="term" value="F:heparin binding"/>
    <property type="evidence" value="ECO:0000314"/>
    <property type="project" value="MGI"/>
</dbReference>
<dbReference type="GO" id="GO:0005102">
    <property type="term" value="F:signaling receptor binding"/>
    <property type="evidence" value="ECO:0007669"/>
    <property type="project" value="Ensembl"/>
</dbReference>
<dbReference type="GO" id="GO:0030282">
    <property type="term" value="P:bone mineralization"/>
    <property type="evidence" value="ECO:0000316"/>
    <property type="project" value="MGI"/>
</dbReference>
<dbReference type="GO" id="GO:0060070">
    <property type="term" value="P:canonical Wnt signaling pathway"/>
    <property type="evidence" value="ECO:0000314"/>
    <property type="project" value="MGI"/>
</dbReference>
<dbReference type="GO" id="GO:0071542">
    <property type="term" value="P:dopaminergic neuron differentiation"/>
    <property type="evidence" value="ECO:0000315"/>
    <property type="project" value="MGI"/>
</dbReference>
<dbReference type="GO" id="GO:0035115">
    <property type="term" value="P:embryonic forelimb morphogenesis"/>
    <property type="evidence" value="ECO:0000315"/>
    <property type="project" value="MGI"/>
</dbReference>
<dbReference type="GO" id="GO:0035116">
    <property type="term" value="P:embryonic hindlimb morphogenesis"/>
    <property type="evidence" value="ECO:0000315"/>
    <property type="project" value="MGI"/>
</dbReference>
<dbReference type="GO" id="GO:0060441">
    <property type="term" value="P:epithelial tube branching involved in lung morphogenesis"/>
    <property type="evidence" value="ECO:0000315"/>
    <property type="project" value="MGI"/>
</dbReference>
<dbReference type="GO" id="GO:0060437">
    <property type="term" value="P:lung growth"/>
    <property type="evidence" value="ECO:0000315"/>
    <property type="project" value="MGI"/>
</dbReference>
<dbReference type="GO" id="GO:0042489">
    <property type="term" value="P:negative regulation of odontogenesis of dentin-containing tooth"/>
    <property type="evidence" value="ECO:0000315"/>
    <property type="project" value="MGI"/>
</dbReference>
<dbReference type="GO" id="GO:0001649">
    <property type="term" value="P:osteoblast differentiation"/>
    <property type="evidence" value="ECO:0000316"/>
    <property type="project" value="MGI"/>
</dbReference>
<dbReference type="GO" id="GO:0090263">
    <property type="term" value="P:positive regulation of canonical Wnt signaling pathway"/>
    <property type="evidence" value="ECO:0000314"/>
    <property type="project" value="MGI"/>
</dbReference>
<dbReference type="GO" id="GO:0060535">
    <property type="term" value="P:trachea cartilage morphogenesis"/>
    <property type="evidence" value="ECO:0000316"/>
    <property type="project" value="MGI"/>
</dbReference>
<dbReference type="CDD" id="cd00064">
    <property type="entry name" value="FU"/>
    <property type="match status" value="1"/>
</dbReference>
<dbReference type="FunFam" id="2.20.100.10:FF:000028">
    <property type="entry name" value="R-spondin 2"/>
    <property type="match status" value="1"/>
</dbReference>
<dbReference type="FunFam" id="2.10.220.10:FF:000012">
    <property type="entry name" value="R-spondin 4"/>
    <property type="match status" value="1"/>
</dbReference>
<dbReference type="Gene3D" id="2.10.220.10">
    <property type="entry name" value="Hormone Receptor, Insulin-like Growth Factor Receptor 1, Chain A, domain 2"/>
    <property type="match status" value="1"/>
</dbReference>
<dbReference type="Gene3D" id="2.20.100.10">
    <property type="entry name" value="Thrombospondin type-1 (TSP1) repeat"/>
    <property type="match status" value="1"/>
</dbReference>
<dbReference type="InterPro" id="IPR006212">
    <property type="entry name" value="Furin_repeat"/>
</dbReference>
<dbReference type="InterPro" id="IPR009030">
    <property type="entry name" value="Growth_fac_rcpt_cys_sf"/>
</dbReference>
<dbReference type="InterPro" id="IPR051514">
    <property type="entry name" value="R-spondin"/>
</dbReference>
<dbReference type="InterPro" id="IPR043601">
    <property type="entry name" value="Rspo_Fu-CRD_dom"/>
</dbReference>
<dbReference type="InterPro" id="IPR000884">
    <property type="entry name" value="TSP1_rpt"/>
</dbReference>
<dbReference type="InterPro" id="IPR036383">
    <property type="entry name" value="TSP1_rpt_sf"/>
</dbReference>
<dbReference type="InterPro" id="IPR044004">
    <property type="entry name" value="TSP1_spondin_dom"/>
</dbReference>
<dbReference type="PANTHER" id="PTHR46987">
    <property type="entry name" value="NEUROHYPOPHYSIAL HORMONES, N-TERMINAL DOMAIN CONTAINING PROTEIN"/>
    <property type="match status" value="1"/>
</dbReference>
<dbReference type="PANTHER" id="PTHR46987:SF4">
    <property type="entry name" value="R-SPONDIN-2"/>
    <property type="match status" value="1"/>
</dbReference>
<dbReference type="Pfam" id="PF15913">
    <property type="entry name" value="Furin-like_2"/>
    <property type="match status" value="1"/>
</dbReference>
<dbReference type="Pfam" id="PF19028">
    <property type="entry name" value="TSP1_spondin"/>
    <property type="match status" value="1"/>
</dbReference>
<dbReference type="SMART" id="SM00261">
    <property type="entry name" value="FU"/>
    <property type="match status" value="2"/>
</dbReference>
<dbReference type="SMART" id="SM00209">
    <property type="entry name" value="TSP1"/>
    <property type="match status" value="1"/>
</dbReference>
<dbReference type="SUPFAM" id="SSF57184">
    <property type="entry name" value="Growth factor receptor domain"/>
    <property type="match status" value="1"/>
</dbReference>
<dbReference type="SUPFAM" id="SSF82895">
    <property type="entry name" value="TSP-1 type 1 repeat"/>
    <property type="match status" value="1"/>
</dbReference>
<dbReference type="PROSITE" id="PS50092">
    <property type="entry name" value="TSP1"/>
    <property type="match status" value="1"/>
</dbReference>
<organism>
    <name type="scientific">Mus musculus</name>
    <name type="common">Mouse</name>
    <dbReference type="NCBI Taxonomy" id="10090"/>
    <lineage>
        <taxon>Eukaryota</taxon>
        <taxon>Metazoa</taxon>
        <taxon>Chordata</taxon>
        <taxon>Craniata</taxon>
        <taxon>Vertebrata</taxon>
        <taxon>Euteleostomi</taxon>
        <taxon>Mammalia</taxon>
        <taxon>Eutheria</taxon>
        <taxon>Euarchontoglires</taxon>
        <taxon>Glires</taxon>
        <taxon>Rodentia</taxon>
        <taxon>Myomorpha</taxon>
        <taxon>Muroidea</taxon>
        <taxon>Muridae</taxon>
        <taxon>Murinae</taxon>
        <taxon>Mus</taxon>
        <taxon>Mus</taxon>
    </lineage>
</organism>
<name>RSPO2_MOUSE</name>
<accession>Q8BFU0</accession>
<accession>Q7TPX3</accession>